<gene>
    <name evidence="1" type="primary">buk</name>
    <name type="ordered locus">OB1868</name>
</gene>
<evidence type="ECO:0000255" key="1">
    <source>
        <dbReference type="HAMAP-Rule" id="MF_00542"/>
    </source>
</evidence>
<name>BUK_OCEIH</name>
<accession>Q8CXE5</accession>
<sequence length="358" mass="40015">MQTNGRILVVQPELYATTIGVFENERFLYKQTIQHNEEELSKFTRIMDQVAYRKQTLLHQLDLDGINISKFSAVCGRGGLLQPITGGTYAVNDKMLYDLKTASYGEHVSNLGAVIADSIAKGLNIPAYIVDPPVVDEMQSIARISGIPEIERKSIFHALNHRQAGRLASKRLGKNYNELNLIVIHIARGITIGAHNKGKIIDVTNGLEGEGPFTIDRSGGIPIARFLRYGIDKFDQIEDWEQKLIKQSGLKGYLHTEDPKVIQLNLLKKDPWTMEIMQALAYQIAKEIGSMSTVLHGEVDGIVFTGNVEDDDFVMKEVITRINWIADVMVFPGNNELEAMNEGVLQVIRGEIPVKVYP</sequence>
<feature type="chain" id="PRO_0000107673" description="Probable butyrate kinase">
    <location>
        <begin position="1"/>
        <end position="358"/>
    </location>
</feature>
<comment type="catalytic activity">
    <reaction evidence="1">
        <text>butanoate + ATP = butanoyl phosphate + ADP</text>
        <dbReference type="Rhea" id="RHEA:13585"/>
        <dbReference type="ChEBI" id="CHEBI:17968"/>
        <dbReference type="ChEBI" id="CHEBI:30616"/>
        <dbReference type="ChEBI" id="CHEBI:58079"/>
        <dbReference type="ChEBI" id="CHEBI:456216"/>
        <dbReference type="EC" id="2.7.2.7"/>
    </reaction>
</comment>
<comment type="subcellular location">
    <subcellularLocation>
        <location evidence="1">Cytoplasm</location>
    </subcellularLocation>
</comment>
<comment type="similarity">
    <text evidence="1">Belongs to the acetokinase family.</text>
</comment>
<organism>
    <name type="scientific">Oceanobacillus iheyensis (strain DSM 14371 / CIP 107618 / JCM 11309 / KCTC 3954 / HTE831)</name>
    <dbReference type="NCBI Taxonomy" id="221109"/>
    <lineage>
        <taxon>Bacteria</taxon>
        <taxon>Bacillati</taxon>
        <taxon>Bacillota</taxon>
        <taxon>Bacilli</taxon>
        <taxon>Bacillales</taxon>
        <taxon>Bacillaceae</taxon>
        <taxon>Oceanobacillus</taxon>
    </lineage>
</organism>
<keyword id="KW-0067">ATP-binding</keyword>
<keyword id="KW-0963">Cytoplasm</keyword>
<keyword id="KW-0418">Kinase</keyword>
<keyword id="KW-0547">Nucleotide-binding</keyword>
<keyword id="KW-1185">Reference proteome</keyword>
<keyword id="KW-0808">Transferase</keyword>
<protein>
    <recommendedName>
        <fullName evidence="1">Probable butyrate kinase</fullName>
        <shortName evidence="1">BK</shortName>
        <ecNumber evidence="1">2.7.2.7</ecNumber>
    </recommendedName>
    <alternativeName>
        <fullName evidence="1">Branched-chain carboxylic acid kinase</fullName>
    </alternativeName>
</protein>
<dbReference type="EC" id="2.7.2.7" evidence="1"/>
<dbReference type="EMBL" id="BA000028">
    <property type="protein sequence ID" value="BAC13824.1"/>
    <property type="molecule type" value="Genomic_DNA"/>
</dbReference>
<dbReference type="RefSeq" id="WP_011066264.1">
    <property type="nucleotide sequence ID" value="NC_004193.1"/>
</dbReference>
<dbReference type="SMR" id="Q8CXE5"/>
<dbReference type="STRING" id="221109.gene:10734108"/>
<dbReference type="KEGG" id="oih:OB1868"/>
<dbReference type="eggNOG" id="COG3426">
    <property type="taxonomic scope" value="Bacteria"/>
</dbReference>
<dbReference type="HOGENOM" id="CLU_048716_0_0_9"/>
<dbReference type="OrthoDB" id="9771859at2"/>
<dbReference type="PhylomeDB" id="Q8CXE5"/>
<dbReference type="Proteomes" id="UP000000822">
    <property type="component" value="Chromosome"/>
</dbReference>
<dbReference type="GO" id="GO:0005737">
    <property type="term" value="C:cytoplasm"/>
    <property type="evidence" value="ECO:0007669"/>
    <property type="project" value="UniProtKB-SubCell"/>
</dbReference>
<dbReference type="GO" id="GO:0008776">
    <property type="term" value="F:acetate kinase activity"/>
    <property type="evidence" value="ECO:0007669"/>
    <property type="project" value="TreeGrafter"/>
</dbReference>
<dbReference type="GO" id="GO:0005524">
    <property type="term" value="F:ATP binding"/>
    <property type="evidence" value="ECO:0007669"/>
    <property type="project" value="UniProtKB-KW"/>
</dbReference>
<dbReference type="GO" id="GO:0047761">
    <property type="term" value="F:butyrate kinase activity"/>
    <property type="evidence" value="ECO:0007669"/>
    <property type="project" value="UniProtKB-UniRule"/>
</dbReference>
<dbReference type="GO" id="GO:0006083">
    <property type="term" value="P:acetate metabolic process"/>
    <property type="evidence" value="ECO:0007669"/>
    <property type="project" value="TreeGrafter"/>
</dbReference>
<dbReference type="CDD" id="cd24011">
    <property type="entry name" value="ASKHA_NBD_BK"/>
    <property type="match status" value="1"/>
</dbReference>
<dbReference type="Gene3D" id="3.30.420.40">
    <property type="match status" value="2"/>
</dbReference>
<dbReference type="HAMAP" id="MF_00542">
    <property type="entry name" value="Butyrate_kinase"/>
    <property type="match status" value="1"/>
</dbReference>
<dbReference type="InterPro" id="IPR000890">
    <property type="entry name" value="Aliphatic_acid_kin_short-chain"/>
</dbReference>
<dbReference type="InterPro" id="IPR043129">
    <property type="entry name" value="ATPase_NBD"/>
</dbReference>
<dbReference type="InterPro" id="IPR011245">
    <property type="entry name" value="Butyrate_kin"/>
</dbReference>
<dbReference type="NCBIfam" id="TIGR02707">
    <property type="entry name" value="butyr_kinase"/>
    <property type="match status" value="1"/>
</dbReference>
<dbReference type="NCBIfam" id="NF002834">
    <property type="entry name" value="PRK03011.1-5"/>
    <property type="match status" value="1"/>
</dbReference>
<dbReference type="PANTHER" id="PTHR21060">
    <property type="entry name" value="ACETATE KINASE"/>
    <property type="match status" value="1"/>
</dbReference>
<dbReference type="PANTHER" id="PTHR21060:SF3">
    <property type="entry name" value="BUTYRATE KINASE 2-RELATED"/>
    <property type="match status" value="1"/>
</dbReference>
<dbReference type="Pfam" id="PF00871">
    <property type="entry name" value="Acetate_kinase"/>
    <property type="match status" value="1"/>
</dbReference>
<dbReference type="PIRSF" id="PIRSF036458">
    <property type="entry name" value="Butyrate_kin"/>
    <property type="match status" value="1"/>
</dbReference>
<dbReference type="PRINTS" id="PR00471">
    <property type="entry name" value="ACETATEKNASE"/>
</dbReference>
<dbReference type="SUPFAM" id="SSF53067">
    <property type="entry name" value="Actin-like ATPase domain"/>
    <property type="match status" value="2"/>
</dbReference>
<proteinExistence type="inferred from homology"/>
<reference key="1">
    <citation type="journal article" date="2002" name="Nucleic Acids Res.">
        <title>Genome sequence of Oceanobacillus iheyensis isolated from the Iheya Ridge and its unexpected adaptive capabilities to extreme environments.</title>
        <authorList>
            <person name="Takami H."/>
            <person name="Takaki Y."/>
            <person name="Uchiyama I."/>
        </authorList>
    </citation>
    <scope>NUCLEOTIDE SEQUENCE [LARGE SCALE GENOMIC DNA]</scope>
    <source>
        <strain>DSM 14371 / CIP 107618 / JCM 11309 / KCTC 3954 / HTE831</strain>
    </source>
</reference>